<sequence length="653" mass="75575">MKTIDMKYLRLLAKEYPTIAKTATEIINLEAIMNLPKGTEHFLSDVHGEYSAFEQVLRNGSGVVKRKIRDIFGAELDDAEINSLSTLIYYPEEKMDLLASETEDLQAWYRTTLFRLIELCQYVASKYTRSKVRKAMPEDFAYILEELLHENYNEDDKKLYYEEILQHIISLGRAEEFISALSLLIQQLVVDHLHIVGDVYDRGPYPDKIMDTLMNYHSLDFQWGNHDILWMGAASGSRVCAANVIRISARYLNLDILEDSYGISLRPLALFADEVYKDDPCTYFQPKNEENINYSNAEITQIARMHKAISIIQFKLEGEIINRRKEFDMDHRLLLQFIDYKKGTIHLKGKEYLLLDSHFPTINPEKPYELTDAERELIGKITAAFKNCRRLQKHVQFLYSKGSMFLTYNGNLLYHGCIPLHEDGTFMEMKLRGEKYAGRSLLEQFEILTREAYVRPTGTKEKKYACDIVWYLWTGAISSLFGKSEMTTFERYFVAEKETHTEEKNPYYKLRNNELICKQILEEFGLDGECGHIINGHTPVKEGKGESPIKANGKMLVIDGGFAKAYHKETNLAGYTLLFNSYGLQLVSHQPFTTKEDAIKNETDILSTRQVIEMEINRKRVRDTDIGAKLSEQAEDLKLLLDAYRNGLLHENR</sequence>
<protein>
    <recommendedName>
        <fullName evidence="1">Fructose-1,6-bisphosphatase class 3</fullName>
        <shortName evidence="1">FBPase class 3</shortName>
        <ecNumber evidence="1">3.1.3.11</ecNumber>
    </recommendedName>
    <alternativeName>
        <fullName evidence="1">D-fructose-1,6-bisphosphate 1-phosphohydrolase class 3</fullName>
    </alternativeName>
</protein>
<comment type="catalytic activity">
    <reaction evidence="1">
        <text>beta-D-fructose 1,6-bisphosphate + H2O = beta-D-fructose 6-phosphate + phosphate</text>
        <dbReference type="Rhea" id="RHEA:11064"/>
        <dbReference type="ChEBI" id="CHEBI:15377"/>
        <dbReference type="ChEBI" id="CHEBI:32966"/>
        <dbReference type="ChEBI" id="CHEBI:43474"/>
        <dbReference type="ChEBI" id="CHEBI:57634"/>
        <dbReference type="EC" id="3.1.3.11"/>
    </reaction>
</comment>
<comment type="cofactor">
    <cofactor evidence="1">
        <name>Mn(2+)</name>
        <dbReference type="ChEBI" id="CHEBI:29035"/>
    </cofactor>
</comment>
<comment type="pathway">
    <text evidence="1">Carbohydrate biosynthesis; gluconeogenesis.</text>
</comment>
<comment type="similarity">
    <text evidence="1">Belongs to the FBPase class 3 family.</text>
</comment>
<reference key="1">
    <citation type="journal article" date="2004" name="Nucleic Acids Res.">
        <title>Whole genome comparisons of serotype 4b and 1/2a strains of the food-borne pathogen Listeria monocytogenes reveal new insights into the core genome components of this species.</title>
        <authorList>
            <person name="Nelson K.E."/>
            <person name="Fouts D.E."/>
            <person name="Mongodin E.F."/>
            <person name="Ravel J."/>
            <person name="DeBoy R.T."/>
            <person name="Kolonay J.F."/>
            <person name="Rasko D.A."/>
            <person name="Angiuoli S.V."/>
            <person name="Gill S.R."/>
            <person name="Paulsen I.T."/>
            <person name="Peterson J.D."/>
            <person name="White O."/>
            <person name="Nelson W.C."/>
            <person name="Nierman W.C."/>
            <person name="Beanan M.J."/>
            <person name="Brinkac L.M."/>
            <person name="Daugherty S.C."/>
            <person name="Dodson R.J."/>
            <person name="Durkin A.S."/>
            <person name="Madupu R."/>
            <person name="Haft D.H."/>
            <person name="Selengut J."/>
            <person name="Van Aken S.E."/>
            <person name="Khouri H.M."/>
            <person name="Fedorova N."/>
            <person name="Forberger H.A."/>
            <person name="Tran B."/>
            <person name="Kathariou S."/>
            <person name="Wonderling L.D."/>
            <person name="Uhlich G.A."/>
            <person name="Bayles D.O."/>
            <person name="Luchansky J.B."/>
            <person name="Fraser C.M."/>
        </authorList>
    </citation>
    <scope>NUCLEOTIDE SEQUENCE [LARGE SCALE GENOMIC DNA]</scope>
    <source>
        <strain>F2365</strain>
    </source>
</reference>
<organism>
    <name type="scientific">Listeria monocytogenes serotype 4b (strain F2365)</name>
    <dbReference type="NCBI Taxonomy" id="265669"/>
    <lineage>
        <taxon>Bacteria</taxon>
        <taxon>Bacillati</taxon>
        <taxon>Bacillota</taxon>
        <taxon>Bacilli</taxon>
        <taxon>Bacillales</taxon>
        <taxon>Listeriaceae</taxon>
        <taxon>Listeria</taxon>
    </lineage>
</organism>
<dbReference type="EC" id="3.1.3.11" evidence="1"/>
<dbReference type="EMBL" id="AE017262">
    <property type="protein sequence ID" value="AAT03627.1"/>
    <property type="molecule type" value="Genomic_DNA"/>
</dbReference>
<dbReference type="RefSeq" id="WP_003740500.1">
    <property type="nucleotide sequence ID" value="NC_002973.6"/>
</dbReference>
<dbReference type="DNASU" id="2797058"/>
<dbReference type="KEGG" id="lmf:LMOf2365_0847"/>
<dbReference type="HOGENOM" id="CLU_028392_2_0_9"/>
<dbReference type="UniPathway" id="UPA00138"/>
<dbReference type="GO" id="GO:0042132">
    <property type="term" value="F:fructose 1,6-bisphosphate 1-phosphatase activity"/>
    <property type="evidence" value="ECO:0007669"/>
    <property type="project" value="UniProtKB-UniRule"/>
</dbReference>
<dbReference type="GO" id="GO:0006094">
    <property type="term" value="P:gluconeogenesis"/>
    <property type="evidence" value="ECO:0007669"/>
    <property type="project" value="UniProtKB-UniRule"/>
</dbReference>
<dbReference type="Gene3D" id="3.60.21.10">
    <property type="match status" value="1"/>
</dbReference>
<dbReference type="HAMAP" id="MF_01854">
    <property type="entry name" value="FBPase_class3"/>
    <property type="match status" value="1"/>
</dbReference>
<dbReference type="InterPro" id="IPR009164">
    <property type="entry name" value="FBPtase_class3"/>
</dbReference>
<dbReference type="InterPro" id="IPR029052">
    <property type="entry name" value="Metallo-depent_PP-like"/>
</dbReference>
<dbReference type="Pfam" id="PF06874">
    <property type="entry name" value="FBPase_2"/>
    <property type="match status" value="1"/>
</dbReference>
<dbReference type="PIRSF" id="PIRSF000906">
    <property type="entry name" value="FBPtase_Bacill"/>
    <property type="match status" value="1"/>
</dbReference>
<dbReference type="SUPFAM" id="SSF56300">
    <property type="entry name" value="Metallo-dependent phosphatases"/>
    <property type="match status" value="1"/>
</dbReference>
<keyword id="KW-0119">Carbohydrate metabolism</keyword>
<keyword id="KW-0378">Hydrolase</keyword>
<keyword id="KW-0464">Manganese</keyword>
<gene>
    <name evidence="1" type="primary">fbp</name>
    <name type="ordered locus">LMOf2365_0847</name>
</gene>
<name>F16PC_LISMF</name>
<feature type="chain" id="PRO_0000363102" description="Fructose-1,6-bisphosphatase class 3">
    <location>
        <begin position="1"/>
        <end position="653"/>
    </location>
</feature>
<evidence type="ECO:0000255" key="1">
    <source>
        <dbReference type="HAMAP-Rule" id="MF_01854"/>
    </source>
</evidence>
<accession>Q721Y7</accession>
<proteinExistence type="inferred from homology"/>